<reference key="1">
    <citation type="journal article" date="2011" name="Stand. Genomic Sci.">
        <title>Complete genome sequence of the halophilic and highly halotolerant Chromohalobacter salexigens type strain (1H11(T)).</title>
        <authorList>
            <person name="Copeland A."/>
            <person name="O'Connor K."/>
            <person name="Lucas S."/>
            <person name="Lapidus A."/>
            <person name="Berry K.W."/>
            <person name="Detter J.C."/>
            <person name="Del Rio T.G."/>
            <person name="Hammon N."/>
            <person name="Dalin E."/>
            <person name="Tice H."/>
            <person name="Pitluck S."/>
            <person name="Bruce D."/>
            <person name="Goodwin L."/>
            <person name="Han C."/>
            <person name="Tapia R."/>
            <person name="Saunders E."/>
            <person name="Schmutz J."/>
            <person name="Brettin T."/>
            <person name="Larimer F."/>
            <person name="Land M."/>
            <person name="Hauser L."/>
            <person name="Vargas C."/>
            <person name="Nieto J.J."/>
            <person name="Kyrpides N.C."/>
            <person name="Ivanova N."/>
            <person name="Goker M."/>
            <person name="Klenk H.P."/>
            <person name="Csonka L.N."/>
            <person name="Woyke T."/>
        </authorList>
    </citation>
    <scope>NUCLEOTIDE SEQUENCE [LARGE SCALE GENOMIC DNA]</scope>
    <source>
        <strain>ATCC BAA-138 / DSM 3043 / CIP 106854 / NCIMB 13768 / 1H11</strain>
    </source>
</reference>
<organism>
    <name type="scientific">Chromohalobacter salexigens (strain ATCC BAA-138 / DSM 3043 / CIP 106854 / NCIMB 13768 / 1H11)</name>
    <dbReference type="NCBI Taxonomy" id="290398"/>
    <lineage>
        <taxon>Bacteria</taxon>
        <taxon>Pseudomonadati</taxon>
        <taxon>Pseudomonadota</taxon>
        <taxon>Gammaproteobacteria</taxon>
        <taxon>Oceanospirillales</taxon>
        <taxon>Halomonadaceae</taxon>
        <taxon>Chromohalobacter</taxon>
    </lineage>
</organism>
<accession>Q1QUL6</accession>
<feature type="chain" id="PRO_0000271818" description="Protein nucleotidyltransferase YdiU">
    <location>
        <begin position="1"/>
        <end position="494"/>
    </location>
</feature>
<feature type="active site" description="Proton acceptor" evidence="1">
    <location>
        <position position="262"/>
    </location>
</feature>
<feature type="binding site" evidence="1">
    <location>
        <position position="101"/>
    </location>
    <ligand>
        <name>ATP</name>
        <dbReference type="ChEBI" id="CHEBI:30616"/>
    </ligand>
</feature>
<feature type="binding site" evidence="1">
    <location>
        <position position="103"/>
    </location>
    <ligand>
        <name>ATP</name>
        <dbReference type="ChEBI" id="CHEBI:30616"/>
    </ligand>
</feature>
<feature type="binding site" evidence="1">
    <location>
        <position position="104"/>
    </location>
    <ligand>
        <name>ATP</name>
        <dbReference type="ChEBI" id="CHEBI:30616"/>
    </ligand>
</feature>
<feature type="binding site" evidence="1">
    <location>
        <position position="123"/>
    </location>
    <ligand>
        <name>ATP</name>
        <dbReference type="ChEBI" id="CHEBI:30616"/>
    </ligand>
</feature>
<feature type="binding site" evidence="1">
    <location>
        <position position="135"/>
    </location>
    <ligand>
        <name>ATP</name>
        <dbReference type="ChEBI" id="CHEBI:30616"/>
    </ligand>
</feature>
<feature type="binding site" evidence="1">
    <location>
        <position position="136"/>
    </location>
    <ligand>
        <name>ATP</name>
        <dbReference type="ChEBI" id="CHEBI:30616"/>
    </ligand>
</feature>
<feature type="binding site" evidence="1">
    <location>
        <position position="186"/>
    </location>
    <ligand>
        <name>ATP</name>
        <dbReference type="ChEBI" id="CHEBI:30616"/>
    </ligand>
</feature>
<feature type="binding site" evidence="1">
    <location>
        <position position="193"/>
    </location>
    <ligand>
        <name>ATP</name>
        <dbReference type="ChEBI" id="CHEBI:30616"/>
    </ligand>
</feature>
<feature type="binding site" evidence="1">
    <location>
        <position position="263"/>
    </location>
    <ligand>
        <name>Mg(2+)</name>
        <dbReference type="ChEBI" id="CHEBI:18420"/>
    </ligand>
</feature>
<feature type="binding site" evidence="1">
    <location>
        <position position="272"/>
    </location>
    <ligand>
        <name>ATP</name>
        <dbReference type="ChEBI" id="CHEBI:30616"/>
    </ligand>
</feature>
<feature type="binding site" evidence="1">
    <location>
        <position position="272"/>
    </location>
    <ligand>
        <name>Mg(2+)</name>
        <dbReference type="ChEBI" id="CHEBI:18420"/>
    </ligand>
</feature>
<name>SELO_CHRSD</name>
<evidence type="ECO:0000255" key="1">
    <source>
        <dbReference type="HAMAP-Rule" id="MF_00692"/>
    </source>
</evidence>
<protein>
    <recommendedName>
        <fullName evidence="1">Protein nucleotidyltransferase YdiU</fullName>
        <ecNumber evidence="1">2.7.7.-</ecNumber>
    </recommendedName>
    <alternativeName>
        <fullName evidence="1">Protein adenylyltransferase YdiU</fullName>
        <ecNumber evidence="1">2.7.7.108</ecNumber>
    </alternativeName>
    <alternativeName>
        <fullName evidence="1">Protein uridylyltransferase YdiU</fullName>
        <ecNumber evidence="1">2.7.7.-</ecNumber>
    </alternativeName>
</protein>
<keyword id="KW-0067">ATP-binding</keyword>
<keyword id="KW-0460">Magnesium</keyword>
<keyword id="KW-0464">Manganese</keyword>
<keyword id="KW-0479">Metal-binding</keyword>
<keyword id="KW-0547">Nucleotide-binding</keyword>
<keyword id="KW-0548">Nucleotidyltransferase</keyword>
<keyword id="KW-1185">Reference proteome</keyword>
<keyword id="KW-0808">Transferase</keyword>
<comment type="function">
    <text evidence="1">Nucleotidyltransferase involved in the post-translational modification of proteins. It can catalyze the addition of adenosine monophosphate (AMP) or uridine monophosphate (UMP) to a protein, resulting in modifications known as AMPylation and UMPylation.</text>
</comment>
<comment type="catalytic activity">
    <reaction evidence="1">
        <text>L-seryl-[protein] + ATP = 3-O-(5'-adenylyl)-L-seryl-[protein] + diphosphate</text>
        <dbReference type="Rhea" id="RHEA:58120"/>
        <dbReference type="Rhea" id="RHEA-COMP:9863"/>
        <dbReference type="Rhea" id="RHEA-COMP:15073"/>
        <dbReference type="ChEBI" id="CHEBI:29999"/>
        <dbReference type="ChEBI" id="CHEBI:30616"/>
        <dbReference type="ChEBI" id="CHEBI:33019"/>
        <dbReference type="ChEBI" id="CHEBI:142516"/>
        <dbReference type="EC" id="2.7.7.108"/>
    </reaction>
</comment>
<comment type="catalytic activity">
    <reaction evidence="1">
        <text>L-threonyl-[protein] + ATP = 3-O-(5'-adenylyl)-L-threonyl-[protein] + diphosphate</text>
        <dbReference type="Rhea" id="RHEA:54292"/>
        <dbReference type="Rhea" id="RHEA-COMP:11060"/>
        <dbReference type="Rhea" id="RHEA-COMP:13847"/>
        <dbReference type="ChEBI" id="CHEBI:30013"/>
        <dbReference type="ChEBI" id="CHEBI:30616"/>
        <dbReference type="ChEBI" id="CHEBI:33019"/>
        <dbReference type="ChEBI" id="CHEBI:138113"/>
        <dbReference type="EC" id="2.7.7.108"/>
    </reaction>
</comment>
<comment type="catalytic activity">
    <reaction evidence="1">
        <text>L-tyrosyl-[protein] + ATP = O-(5'-adenylyl)-L-tyrosyl-[protein] + diphosphate</text>
        <dbReference type="Rhea" id="RHEA:54288"/>
        <dbReference type="Rhea" id="RHEA-COMP:10136"/>
        <dbReference type="Rhea" id="RHEA-COMP:13846"/>
        <dbReference type="ChEBI" id="CHEBI:30616"/>
        <dbReference type="ChEBI" id="CHEBI:33019"/>
        <dbReference type="ChEBI" id="CHEBI:46858"/>
        <dbReference type="ChEBI" id="CHEBI:83624"/>
        <dbReference type="EC" id="2.7.7.108"/>
    </reaction>
</comment>
<comment type="catalytic activity">
    <reaction evidence="1">
        <text>L-histidyl-[protein] + UTP = N(tele)-(5'-uridylyl)-L-histidyl-[protein] + diphosphate</text>
        <dbReference type="Rhea" id="RHEA:83891"/>
        <dbReference type="Rhea" id="RHEA-COMP:9745"/>
        <dbReference type="Rhea" id="RHEA-COMP:20239"/>
        <dbReference type="ChEBI" id="CHEBI:29979"/>
        <dbReference type="ChEBI" id="CHEBI:33019"/>
        <dbReference type="ChEBI" id="CHEBI:46398"/>
        <dbReference type="ChEBI" id="CHEBI:233474"/>
    </reaction>
</comment>
<comment type="catalytic activity">
    <reaction evidence="1">
        <text>L-seryl-[protein] + UTP = O-(5'-uridylyl)-L-seryl-[protein] + diphosphate</text>
        <dbReference type="Rhea" id="RHEA:64604"/>
        <dbReference type="Rhea" id="RHEA-COMP:9863"/>
        <dbReference type="Rhea" id="RHEA-COMP:16635"/>
        <dbReference type="ChEBI" id="CHEBI:29999"/>
        <dbReference type="ChEBI" id="CHEBI:33019"/>
        <dbReference type="ChEBI" id="CHEBI:46398"/>
        <dbReference type="ChEBI" id="CHEBI:156051"/>
    </reaction>
</comment>
<comment type="catalytic activity">
    <reaction evidence="1">
        <text>L-tyrosyl-[protein] + UTP = O-(5'-uridylyl)-L-tyrosyl-[protein] + diphosphate</text>
        <dbReference type="Rhea" id="RHEA:83887"/>
        <dbReference type="Rhea" id="RHEA-COMP:10136"/>
        <dbReference type="Rhea" id="RHEA-COMP:20238"/>
        <dbReference type="ChEBI" id="CHEBI:33019"/>
        <dbReference type="ChEBI" id="CHEBI:46398"/>
        <dbReference type="ChEBI" id="CHEBI:46858"/>
        <dbReference type="ChEBI" id="CHEBI:90602"/>
    </reaction>
</comment>
<comment type="cofactor">
    <cofactor evidence="1">
        <name>Mg(2+)</name>
        <dbReference type="ChEBI" id="CHEBI:18420"/>
    </cofactor>
    <cofactor evidence="1">
        <name>Mn(2+)</name>
        <dbReference type="ChEBI" id="CHEBI:29035"/>
    </cofactor>
</comment>
<comment type="similarity">
    <text evidence="1">Belongs to the SELO family.</text>
</comment>
<dbReference type="EC" id="2.7.7.-" evidence="1"/>
<dbReference type="EC" id="2.7.7.108" evidence="1"/>
<dbReference type="EMBL" id="CP000285">
    <property type="protein sequence ID" value="ABE59842.1"/>
    <property type="molecule type" value="Genomic_DNA"/>
</dbReference>
<dbReference type="SMR" id="Q1QUL6"/>
<dbReference type="STRING" id="290398.Csal_2495"/>
<dbReference type="KEGG" id="csa:Csal_2495"/>
<dbReference type="eggNOG" id="COG0397">
    <property type="taxonomic scope" value="Bacteria"/>
</dbReference>
<dbReference type="HOGENOM" id="CLU_010245_4_1_6"/>
<dbReference type="OrthoDB" id="9776281at2"/>
<dbReference type="Proteomes" id="UP000000239">
    <property type="component" value="Chromosome"/>
</dbReference>
<dbReference type="GO" id="GO:0070733">
    <property type="term" value="F:AMPylase activity"/>
    <property type="evidence" value="ECO:0007669"/>
    <property type="project" value="RHEA"/>
</dbReference>
<dbReference type="GO" id="GO:0005524">
    <property type="term" value="F:ATP binding"/>
    <property type="evidence" value="ECO:0007669"/>
    <property type="project" value="UniProtKB-UniRule"/>
</dbReference>
<dbReference type="GO" id="GO:0000287">
    <property type="term" value="F:magnesium ion binding"/>
    <property type="evidence" value="ECO:0007669"/>
    <property type="project" value="UniProtKB-UniRule"/>
</dbReference>
<dbReference type="HAMAP" id="MF_00692">
    <property type="entry name" value="YdiU_SelO"/>
    <property type="match status" value="1"/>
</dbReference>
<dbReference type="InterPro" id="IPR003846">
    <property type="entry name" value="SelO"/>
</dbReference>
<dbReference type="NCBIfam" id="NF000658">
    <property type="entry name" value="PRK00029.1"/>
    <property type="match status" value="1"/>
</dbReference>
<dbReference type="PANTHER" id="PTHR32057">
    <property type="entry name" value="PROTEIN ADENYLYLTRANSFERASE SELO, MITOCHONDRIAL"/>
    <property type="match status" value="1"/>
</dbReference>
<dbReference type="PANTHER" id="PTHR32057:SF14">
    <property type="entry name" value="PROTEIN ADENYLYLTRANSFERASE SELO, MITOCHONDRIAL"/>
    <property type="match status" value="1"/>
</dbReference>
<dbReference type="Pfam" id="PF02696">
    <property type="entry name" value="SelO"/>
    <property type="match status" value="1"/>
</dbReference>
<proteinExistence type="inferred from homology"/>
<gene>
    <name evidence="1" type="primary">ydiU</name>
    <name evidence="1" type="synonym">selO</name>
    <name type="ordered locus">Csal_2495</name>
</gene>
<sequence length="494" mass="54948">MPLREVTMTLDSLRFDNAWARLPEDFFTRVSPATWKNTRLLDISPRGCRALGLDPACFDDDAPARETLRQLMGGETVLPGMAPLAQKYTGHQFGVYNPALGDGRGLLMGEAQTADGYWDLHLKGAGQTPYSRFGDGRAVLRSSVREYLAGEAMAGLGVPTTLALALATNDEKVQRERVEPGATLLRLAPSHVRFGHFEWLYQSRRHDDMRRLVDHVIERHRPALAASESPAEALFGDVVARTARLIAAWQAYGFVHAVMNTDNMSILGLTLDYGPYAFMDAYDPRLVPNHTDANGRYAFDQQPGVGLWNLSVLGQSLTPLAEPDALRDRLTEYEPALQQEYARLMRARLGLESVVEGDAQLVQDWLTLLAEAGADYHRAFRALGEWAVDDGEWLRQEVPVEGLSAWLSRYHERLQEEERDAASRRDAMQAVNPLYVLRTHLAQQVIEAAEAGDEAPLVEFRRLLADPFTARPGMERWAAAPPPQASVICLSCSS</sequence>